<protein>
    <recommendedName>
        <fullName evidence="1">AA14 family lytic polysaccharide monooxygenase B</fullName>
        <shortName evidence="1">LPMO AA4B</shortName>
        <ecNumber evidence="1">1.14.99.-</ecNumber>
    </recommendedName>
</protein>
<evidence type="ECO:0000250" key="1">
    <source>
        <dbReference type="UniProtKB" id="A0A2I6QB00"/>
    </source>
</evidence>
<evidence type="ECO:0000255" key="2"/>
<evidence type="ECO:0000255" key="3">
    <source>
        <dbReference type="PROSITE-ProRule" id="PRU00498"/>
    </source>
</evidence>
<evidence type="ECO:0000256" key="4">
    <source>
        <dbReference type="SAM" id="MobiDB-lite"/>
    </source>
</evidence>
<evidence type="ECO:0000305" key="5"/>
<sequence length="374" mass="41319">MIPVFLAAIAVFLPLTSGHIAFWHNSMYGFNVTEQTFPYDNRPVVPLQNMTFKEWWFHNHLDYPPHPGDFFELPAGKPAMAELACNKGATTWFNSSEGGNIQNGDDPCPGSPPSEYHTTGFDDLKGCALAIAYEPDVTKIKPEDFTIFSVNQTCVWYRFTDFQVPERMPSCPPGGCHCAWFWIHSPDSGGEQIYMNGFKCKITGSTSNVPLAKPKVARRCGADPDHGKPDAVPGNCTYGAKQPLYWLQQEGNNEFDDYIAPPFYNDLYNFKDGAQNDIFIDSYPHGIPDPSPEQTIIPTPLDAAVISNATPAPSNGSCSSRPPSSPVSSSAASTTTSRSPRPSARGFRRSTGEKAHTGLPRKSWTQSRKMRYVF</sequence>
<accession>A0A060SRI5</accession>
<keyword id="KW-0186">Copper</keyword>
<keyword id="KW-1015">Disulfide bond</keyword>
<keyword id="KW-0325">Glycoprotein</keyword>
<keyword id="KW-0479">Metal-binding</keyword>
<keyword id="KW-0503">Monooxygenase</keyword>
<keyword id="KW-0560">Oxidoreductase</keyword>
<keyword id="KW-1185">Reference proteome</keyword>
<keyword id="KW-0964">Secreted</keyword>
<keyword id="KW-0732">Signal</keyword>
<feature type="signal peptide" evidence="2">
    <location>
        <begin position="1"/>
        <end position="18"/>
    </location>
</feature>
<feature type="chain" id="PRO_5001587743" description="AA14 family lytic polysaccharide monooxygenase B">
    <location>
        <begin position="19"/>
        <end position="374"/>
    </location>
</feature>
<feature type="region of interest" description="Disordered" evidence="4">
    <location>
        <begin position="306"/>
        <end position="374"/>
    </location>
</feature>
<feature type="compositionally biased region" description="Low complexity" evidence="4">
    <location>
        <begin position="313"/>
        <end position="344"/>
    </location>
</feature>
<feature type="glycosylation site" description="N-linked (GlcNAc...) asparagine" evidence="3">
    <location>
        <position position="31"/>
    </location>
</feature>
<feature type="glycosylation site" description="N-linked (GlcNAc...) asparagine" evidence="3">
    <location>
        <position position="49"/>
    </location>
</feature>
<feature type="glycosylation site" description="N-linked (GlcNAc...) asparagine" evidence="3">
    <location>
        <position position="94"/>
    </location>
</feature>
<feature type="glycosylation site" description="N-linked (GlcNAc...) asparagine" evidence="3">
    <location>
        <position position="151"/>
    </location>
</feature>
<feature type="glycosylation site" description="N-linked (GlcNAc...) asparagine" evidence="3">
    <location>
        <position position="235"/>
    </location>
</feature>
<feature type="glycosylation site" description="N-linked (GlcNAc...) asparagine" evidence="3">
    <location>
        <position position="315"/>
    </location>
</feature>
<feature type="disulfide bond" evidence="1">
    <location>
        <begin position="85"/>
        <end position="108"/>
    </location>
</feature>
<feature type="disulfide bond" evidence="1">
    <location>
        <begin position="127"/>
        <end position="154"/>
    </location>
</feature>
<feature type="disulfide bond" evidence="1">
    <location>
        <begin position="171"/>
        <end position="176"/>
    </location>
</feature>
<feature type="disulfide bond" evidence="1">
    <location>
        <begin position="178"/>
        <end position="200"/>
    </location>
</feature>
<feature type="disulfide bond" evidence="1">
    <location>
        <begin position="220"/>
        <end position="236"/>
    </location>
</feature>
<comment type="function">
    <text evidence="1">Lytic polysaccharide monooxygenase (LPMO) that oxidatively cleaves xylan with both C1 and C4 regioselectivity and that specifically targets the protective shield made by heteroxylans that cover cellulose microfibrils in wood (By similarity). Catalysis by LPMOs requires the reduction of the active-site copper from Cu(II) to Cu(I) by a reducing agent and H(2)O(2) or O(2) as a cosubstrate (By similarity). Cleavage occurs only when xylans are bound to cellulose and not when they are in solution (By similarity). Increases the efficiency of wood saccharification through oxidative cleavage of highly refractory xylan-coated cellulose fibers via synergistic relationship with xylan-active enzymes, xylobiohydrolases and cellobiohydrolases (By similarity).</text>
</comment>
<comment type="cofactor">
    <cofactor evidence="1">
        <name>Cu(2+)</name>
        <dbReference type="ChEBI" id="CHEBI:29036"/>
    </cofactor>
    <text evidence="1">Binds 1 copper ion per subunit.</text>
</comment>
<comment type="subcellular location">
    <subcellularLocation>
        <location evidence="1">Secreted</location>
    </subcellularLocation>
</comment>
<comment type="biotechnology">
    <text evidence="1">The unique enzyme activity of AA14 family LPMOs involved in the degradation of woody biomass in nature offers an innovative solution for improving enzyme cocktails for biorefinery applications.</text>
</comment>
<comment type="similarity">
    <text evidence="5">Belongs to the polysaccharide monooxygenase AA14 family.</text>
</comment>
<gene>
    <name evidence="1" type="primary">AA14B</name>
    <name type="ORF">BN946_scf184298.g17</name>
</gene>
<proteinExistence type="inferred from homology"/>
<name>LP14B_PYCCI</name>
<organism>
    <name type="scientific">Pycnoporus cinnabarinus</name>
    <name type="common">Cinnabar-red polypore</name>
    <name type="synonym">Trametes cinnabarina</name>
    <dbReference type="NCBI Taxonomy" id="5643"/>
    <lineage>
        <taxon>Eukaryota</taxon>
        <taxon>Fungi</taxon>
        <taxon>Dikarya</taxon>
        <taxon>Basidiomycota</taxon>
        <taxon>Agaricomycotina</taxon>
        <taxon>Agaricomycetes</taxon>
        <taxon>Polyporales</taxon>
        <taxon>Polyporaceae</taxon>
        <taxon>Trametes</taxon>
    </lineage>
</organism>
<dbReference type="EC" id="1.14.99.-" evidence="1"/>
<dbReference type="EMBL" id="CCBP010000435">
    <property type="protein sequence ID" value="CDO76990.1"/>
    <property type="molecule type" value="Genomic_DNA"/>
</dbReference>
<dbReference type="SMR" id="A0A060SRI5"/>
<dbReference type="STRING" id="5643.A0A060SRI5"/>
<dbReference type="HOGENOM" id="CLU_030284_2_1_1"/>
<dbReference type="OMA" id="IAPPFYN"/>
<dbReference type="OrthoDB" id="2019572at2759"/>
<dbReference type="Proteomes" id="UP000029665">
    <property type="component" value="Unassembled WGS sequence"/>
</dbReference>
<dbReference type="GO" id="GO:0005576">
    <property type="term" value="C:extracellular region"/>
    <property type="evidence" value="ECO:0007669"/>
    <property type="project" value="UniProtKB-SubCell"/>
</dbReference>
<dbReference type="GO" id="GO:0046872">
    <property type="term" value="F:metal ion binding"/>
    <property type="evidence" value="ECO:0007669"/>
    <property type="project" value="UniProtKB-KW"/>
</dbReference>
<dbReference type="GO" id="GO:0004497">
    <property type="term" value="F:monooxygenase activity"/>
    <property type="evidence" value="ECO:0007669"/>
    <property type="project" value="UniProtKB-KW"/>
</dbReference>
<dbReference type="Gene3D" id="2.70.50.70">
    <property type="match status" value="1"/>
</dbReference>
<dbReference type="InterPro" id="IPR054497">
    <property type="entry name" value="LPMO_AA14"/>
</dbReference>
<dbReference type="Pfam" id="PF22810">
    <property type="entry name" value="LPMO_AA14"/>
    <property type="match status" value="1"/>
</dbReference>
<reference key="1">
    <citation type="journal article" date="2014" name="BMC Genomics">
        <title>The genome of the white-rot fungus Pycnoporus cinnabarinus: a basidiomycete model with a versatile arsenal for lignocellulosic biomass breakdown.</title>
        <authorList>
            <person name="Levasseur A."/>
            <person name="Lomascolo A."/>
            <person name="Chabrol O."/>
            <person name="Ruiz-Duenas F.J."/>
            <person name="Boukhris-Uzan E."/>
            <person name="Piumi F."/>
            <person name="Kuees U."/>
            <person name="Ram A.F."/>
            <person name="Murat C."/>
            <person name="Haon M."/>
            <person name="Benoit I."/>
            <person name="Arfi Y."/>
            <person name="Chevret D."/>
            <person name="Drula E."/>
            <person name="Kwon M.J."/>
            <person name="Gouret P."/>
            <person name="Lesage-Meessen L."/>
            <person name="Lombard V."/>
            <person name="Mariette J."/>
            <person name="Noirot C."/>
            <person name="Park J."/>
            <person name="Patyshakuliyeva A."/>
            <person name="Sigoillot J.C."/>
            <person name="Wiebenga A."/>
            <person name="Woesten H.A."/>
            <person name="Martin F."/>
            <person name="Coutinho P.M."/>
            <person name="de Vries R.P."/>
            <person name="Martinez A.T."/>
            <person name="Klopp C."/>
            <person name="Pontarotti P."/>
            <person name="Henrissat B."/>
            <person name="Record E."/>
        </authorList>
    </citation>
    <scope>NUCLEOTIDE SEQUENCE [LARGE SCALE GENOMIC DNA]</scope>
    <source>
        <strain>BRFM137</strain>
    </source>
</reference>